<name>TRUA_CLOAB</name>
<protein>
    <recommendedName>
        <fullName evidence="1">tRNA pseudouridine synthase A</fullName>
        <ecNumber evidence="1">5.4.99.12</ecNumber>
    </recommendedName>
    <alternativeName>
        <fullName evidence="1">tRNA pseudouridine(38-40) synthase</fullName>
    </alternativeName>
    <alternativeName>
        <fullName evidence="1">tRNA pseudouridylate synthase I</fullName>
    </alternativeName>
    <alternativeName>
        <fullName evidence="1">tRNA-uridine isomerase I</fullName>
    </alternativeName>
</protein>
<organism>
    <name type="scientific">Clostridium acetobutylicum (strain ATCC 824 / DSM 792 / JCM 1419 / IAM 19013 / LMG 5710 / NBRC 13948 / NRRL B-527 / VKM B-1787 / 2291 / W)</name>
    <dbReference type="NCBI Taxonomy" id="272562"/>
    <lineage>
        <taxon>Bacteria</taxon>
        <taxon>Bacillati</taxon>
        <taxon>Bacillota</taxon>
        <taxon>Clostridia</taxon>
        <taxon>Eubacteriales</taxon>
        <taxon>Clostridiaceae</taxon>
        <taxon>Clostridium</taxon>
    </lineage>
</organism>
<dbReference type="EC" id="5.4.99.12" evidence="1"/>
<dbReference type="EMBL" id="AE001437">
    <property type="protein sequence ID" value="AAK81039.1"/>
    <property type="molecule type" value="Genomic_DNA"/>
</dbReference>
<dbReference type="PIR" id="D97281">
    <property type="entry name" value="D97281"/>
</dbReference>
<dbReference type="RefSeq" id="NP_349699.1">
    <property type="nucleotide sequence ID" value="NC_003030.1"/>
</dbReference>
<dbReference type="RefSeq" id="WP_010966380.1">
    <property type="nucleotide sequence ID" value="NC_003030.1"/>
</dbReference>
<dbReference type="SMR" id="Q97EL1"/>
<dbReference type="STRING" id="272562.CA_C3099"/>
<dbReference type="GeneID" id="44999586"/>
<dbReference type="KEGG" id="cac:CA_C3099"/>
<dbReference type="PATRIC" id="fig|272562.8.peg.3282"/>
<dbReference type="eggNOG" id="COG0101">
    <property type="taxonomic scope" value="Bacteria"/>
</dbReference>
<dbReference type="HOGENOM" id="CLU_014673_0_1_9"/>
<dbReference type="OrthoDB" id="9811823at2"/>
<dbReference type="Proteomes" id="UP000000814">
    <property type="component" value="Chromosome"/>
</dbReference>
<dbReference type="GO" id="GO:0003723">
    <property type="term" value="F:RNA binding"/>
    <property type="evidence" value="ECO:0007669"/>
    <property type="project" value="InterPro"/>
</dbReference>
<dbReference type="GO" id="GO:0160147">
    <property type="term" value="F:tRNA pseudouridine(38-40) synthase activity"/>
    <property type="evidence" value="ECO:0007669"/>
    <property type="project" value="UniProtKB-EC"/>
</dbReference>
<dbReference type="GO" id="GO:0031119">
    <property type="term" value="P:tRNA pseudouridine synthesis"/>
    <property type="evidence" value="ECO:0007669"/>
    <property type="project" value="UniProtKB-UniRule"/>
</dbReference>
<dbReference type="CDD" id="cd02570">
    <property type="entry name" value="PseudoU_synth_EcTruA"/>
    <property type="match status" value="1"/>
</dbReference>
<dbReference type="FunFam" id="3.30.70.580:FF:000001">
    <property type="entry name" value="tRNA pseudouridine synthase A"/>
    <property type="match status" value="1"/>
</dbReference>
<dbReference type="Gene3D" id="3.30.70.660">
    <property type="entry name" value="Pseudouridine synthase I, catalytic domain, C-terminal subdomain"/>
    <property type="match status" value="1"/>
</dbReference>
<dbReference type="Gene3D" id="3.30.70.580">
    <property type="entry name" value="Pseudouridine synthase I, catalytic domain, N-terminal subdomain"/>
    <property type="match status" value="1"/>
</dbReference>
<dbReference type="HAMAP" id="MF_00171">
    <property type="entry name" value="TruA"/>
    <property type="match status" value="1"/>
</dbReference>
<dbReference type="InterPro" id="IPR020103">
    <property type="entry name" value="PsdUridine_synth_cat_dom_sf"/>
</dbReference>
<dbReference type="InterPro" id="IPR001406">
    <property type="entry name" value="PsdUridine_synth_TruA"/>
</dbReference>
<dbReference type="InterPro" id="IPR020097">
    <property type="entry name" value="PsdUridine_synth_TruA_a/b_dom"/>
</dbReference>
<dbReference type="InterPro" id="IPR020095">
    <property type="entry name" value="PsdUridine_synth_TruA_C"/>
</dbReference>
<dbReference type="InterPro" id="IPR020094">
    <property type="entry name" value="TruA/RsuA/RluB/E/F_N"/>
</dbReference>
<dbReference type="NCBIfam" id="TIGR00071">
    <property type="entry name" value="hisT_truA"/>
    <property type="match status" value="1"/>
</dbReference>
<dbReference type="PANTHER" id="PTHR11142">
    <property type="entry name" value="PSEUDOURIDYLATE SYNTHASE"/>
    <property type="match status" value="1"/>
</dbReference>
<dbReference type="PANTHER" id="PTHR11142:SF0">
    <property type="entry name" value="TRNA PSEUDOURIDINE SYNTHASE-LIKE 1"/>
    <property type="match status" value="1"/>
</dbReference>
<dbReference type="Pfam" id="PF01416">
    <property type="entry name" value="PseudoU_synth_1"/>
    <property type="match status" value="2"/>
</dbReference>
<dbReference type="PIRSF" id="PIRSF001430">
    <property type="entry name" value="tRNA_psdUrid_synth"/>
    <property type="match status" value="1"/>
</dbReference>
<dbReference type="SUPFAM" id="SSF55120">
    <property type="entry name" value="Pseudouridine synthase"/>
    <property type="match status" value="1"/>
</dbReference>
<proteinExistence type="inferred from homology"/>
<evidence type="ECO:0000255" key="1">
    <source>
        <dbReference type="HAMAP-Rule" id="MF_00171"/>
    </source>
</evidence>
<sequence>MKNVKLTLEYDGTNYCGWQKQKNVVTVQEEVEKIIGEITGEKIDVIGCSRTDSGVHAKAYTCNFKTNTVIPPEKFYLVLNSVLPDDIVALNSEEVPMDFHSRFDNKGKTYSYTILNRLQRAAIDRNYVYQYGHKLNCDLMREATKYILGTHDFTSFKSTGSKVKSNIRTIYEARIVEDENKVIFYVTGDGFLYNMVRIIVGTLLEVGEEKITPLNVKTIVESKDRTKAGRVVPAKGLCLEKVMY</sequence>
<reference key="1">
    <citation type="journal article" date="2001" name="J. Bacteriol.">
        <title>Genome sequence and comparative analysis of the solvent-producing bacterium Clostridium acetobutylicum.</title>
        <authorList>
            <person name="Noelling J."/>
            <person name="Breton G."/>
            <person name="Omelchenko M.V."/>
            <person name="Makarova K.S."/>
            <person name="Zeng Q."/>
            <person name="Gibson R."/>
            <person name="Lee H.M."/>
            <person name="Dubois J."/>
            <person name="Qiu D."/>
            <person name="Hitti J."/>
            <person name="Wolf Y.I."/>
            <person name="Tatusov R.L."/>
            <person name="Sabathe F."/>
            <person name="Doucette-Stamm L.A."/>
            <person name="Soucaille P."/>
            <person name="Daly M.J."/>
            <person name="Bennett G.N."/>
            <person name="Koonin E.V."/>
            <person name="Smith D.R."/>
        </authorList>
    </citation>
    <scope>NUCLEOTIDE SEQUENCE [LARGE SCALE GENOMIC DNA]</scope>
    <source>
        <strain>ATCC 824 / DSM 792 / JCM 1419 / IAM 19013 / LMG 5710 / NBRC 13948 / NRRL B-527 / VKM B-1787 / 2291 / W</strain>
    </source>
</reference>
<feature type="chain" id="PRO_0000057363" description="tRNA pseudouridine synthase A">
    <location>
        <begin position="1"/>
        <end position="244"/>
    </location>
</feature>
<feature type="active site" description="Nucleophile" evidence="1">
    <location>
        <position position="52"/>
    </location>
</feature>
<feature type="binding site" evidence="1">
    <location>
        <position position="110"/>
    </location>
    <ligand>
        <name>substrate</name>
    </ligand>
</feature>
<keyword id="KW-0413">Isomerase</keyword>
<keyword id="KW-1185">Reference proteome</keyword>
<keyword id="KW-0819">tRNA processing</keyword>
<comment type="function">
    <text evidence="1">Formation of pseudouridine at positions 38, 39 and 40 in the anticodon stem and loop of transfer RNAs.</text>
</comment>
<comment type="catalytic activity">
    <reaction evidence="1">
        <text>uridine(38/39/40) in tRNA = pseudouridine(38/39/40) in tRNA</text>
        <dbReference type="Rhea" id="RHEA:22376"/>
        <dbReference type="Rhea" id="RHEA-COMP:10085"/>
        <dbReference type="Rhea" id="RHEA-COMP:10087"/>
        <dbReference type="ChEBI" id="CHEBI:65314"/>
        <dbReference type="ChEBI" id="CHEBI:65315"/>
        <dbReference type="EC" id="5.4.99.12"/>
    </reaction>
</comment>
<comment type="subunit">
    <text evidence="1">Homodimer.</text>
</comment>
<comment type="similarity">
    <text evidence="1">Belongs to the tRNA pseudouridine synthase TruA family.</text>
</comment>
<gene>
    <name evidence="1" type="primary">truA</name>
    <name type="ordered locus">CA_C3099</name>
</gene>
<accession>Q97EL1</accession>